<name>DUT_MYCLB</name>
<protein>
    <recommendedName>
        <fullName evidence="1">Deoxyuridine 5'-triphosphate nucleotidohydrolase</fullName>
        <shortName evidence="1">dUTPase</shortName>
        <ecNumber evidence="1">3.6.1.23</ecNumber>
    </recommendedName>
    <alternativeName>
        <fullName evidence="1">dUTP pyrophosphatase</fullName>
    </alternativeName>
</protein>
<evidence type="ECO:0000255" key="1">
    <source>
        <dbReference type="HAMAP-Rule" id="MF_00116"/>
    </source>
</evidence>
<organism>
    <name type="scientific">Mycobacterium leprae (strain Br4923)</name>
    <dbReference type="NCBI Taxonomy" id="561304"/>
    <lineage>
        <taxon>Bacteria</taxon>
        <taxon>Bacillati</taxon>
        <taxon>Actinomycetota</taxon>
        <taxon>Actinomycetes</taxon>
        <taxon>Mycobacteriales</taxon>
        <taxon>Mycobacteriaceae</taxon>
        <taxon>Mycobacterium</taxon>
    </lineage>
</organism>
<gene>
    <name evidence="1" type="primary">dut</name>
    <name type="ordered locus">MLBr01028</name>
</gene>
<proteinExistence type="inferred from homology"/>
<sequence length="154" mass="15928">MSTSLAVVRLDPGLPLPSRAHDGDAGVDLYSVEDVKLAPGQRALVRTGLAVAIPFGMVGLIHPRSGLAVRVGLSIVNSPGTVDAGYRGEIKVALINLDPVEPLVVHRGDRIAQLLVQRVELVELVEVSSFDEAGLAETSRGDGGHGSSGGHASL</sequence>
<feature type="chain" id="PRO_1000119243" description="Deoxyuridine 5'-triphosphate nucleotidohydrolase">
    <location>
        <begin position="1"/>
        <end position="154"/>
    </location>
</feature>
<feature type="binding site" evidence="1">
    <location>
        <begin position="64"/>
        <end position="66"/>
    </location>
    <ligand>
        <name>substrate</name>
    </ligand>
</feature>
<feature type="binding site" evidence="1">
    <location>
        <position position="77"/>
    </location>
    <ligand>
        <name>substrate</name>
    </ligand>
</feature>
<feature type="binding site" evidence="1">
    <location>
        <begin position="81"/>
        <end position="83"/>
    </location>
    <ligand>
        <name>substrate</name>
    </ligand>
</feature>
<feature type="binding site" evidence="1">
    <location>
        <position position="91"/>
    </location>
    <ligand>
        <name>substrate</name>
    </ligand>
</feature>
<keyword id="KW-0378">Hydrolase</keyword>
<keyword id="KW-0460">Magnesium</keyword>
<keyword id="KW-0479">Metal-binding</keyword>
<keyword id="KW-0546">Nucleotide metabolism</keyword>
<accession>B8ZQW4</accession>
<reference key="1">
    <citation type="journal article" date="2009" name="Nat. Genet.">
        <title>Comparative genomic and phylogeographic analysis of Mycobacterium leprae.</title>
        <authorList>
            <person name="Monot M."/>
            <person name="Honore N."/>
            <person name="Garnier T."/>
            <person name="Zidane N."/>
            <person name="Sherafi D."/>
            <person name="Paniz-Mondolfi A."/>
            <person name="Matsuoka M."/>
            <person name="Taylor G.M."/>
            <person name="Donoghue H.D."/>
            <person name="Bouwman A."/>
            <person name="Mays S."/>
            <person name="Watson C."/>
            <person name="Lockwood D."/>
            <person name="Khamispour A."/>
            <person name="Dowlati Y."/>
            <person name="Jianping S."/>
            <person name="Rea T.H."/>
            <person name="Vera-Cabrera L."/>
            <person name="Stefani M.M."/>
            <person name="Banu S."/>
            <person name="Macdonald M."/>
            <person name="Sapkota B.R."/>
            <person name="Spencer J.S."/>
            <person name="Thomas J."/>
            <person name="Harshman K."/>
            <person name="Singh P."/>
            <person name="Busso P."/>
            <person name="Gattiker A."/>
            <person name="Rougemont J."/>
            <person name="Brennan P.J."/>
            <person name="Cole S.T."/>
        </authorList>
    </citation>
    <scope>NUCLEOTIDE SEQUENCE [LARGE SCALE GENOMIC DNA]</scope>
    <source>
        <strain>Br4923</strain>
    </source>
</reference>
<dbReference type="EC" id="3.6.1.23" evidence="1"/>
<dbReference type="EMBL" id="FM211192">
    <property type="protein sequence ID" value="CAR71123.1"/>
    <property type="molecule type" value="Genomic_DNA"/>
</dbReference>
<dbReference type="SMR" id="B8ZQW4"/>
<dbReference type="KEGG" id="mlb:MLBr01028"/>
<dbReference type="HOGENOM" id="CLU_068508_1_3_11"/>
<dbReference type="UniPathway" id="UPA00610">
    <property type="reaction ID" value="UER00666"/>
</dbReference>
<dbReference type="Proteomes" id="UP000006900">
    <property type="component" value="Chromosome"/>
</dbReference>
<dbReference type="GO" id="GO:0004170">
    <property type="term" value="F:dUTP diphosphatase activity"/>
    <property type="evidence" value="ECO:0007669"/>
    <property type="project" value="UniProtKB-UniRule"/>
</dbReference>
<dbReference type="GO" id="GO:0000287">
    <property type="term" value="F:magnesium ion binding"/>
    <property type="evidence" value="ECO:0007669"/>
    <property type="project" value="UniProtKB-UniRule"/>
</dbReference>
<dbReference type="GO" id="GO:0006226">
    <property type="term" value="P:dUMP biosynthetic process"/>
    <property type="evidence" value="ECO:0007669"/>
    <property type="project" value="UniProtKB-UniRule"/>
</dbReference>
<dbReference type="GO" id="GO:0046081">
    <property type="term" value="P:dUTP catabolic process"/>
    <property type="evidence" value="ECO:0007669"/>
    <property type="project" value="InterPro"/>
</dbReference>
<dbReference type="CDD" id="cd07557">
    <property type="entry name" value="trimeric_dUTPase"/>
    <property type="match status" value="1"/>
</dbReference>
<dbReference type="FunFam" id="2.70.40.10:FF:000008">
    <property type="entry name" value="Deoxyuridine 5'-triphosphate nucleotidohydrolase"/>
    <property type="match status" value="1"/>
</dbReference>
<dbReference type="Gene3D" id="2.70.40.10">
    <property type="match status" value="1"/>
</dbReference>
<dbReference type="HAMAP" id="MF_00116">
    <property type="entry name" value="dUTPase_bact"/>
    <property type="match status" value="1"/>
</dbReference>
<dbReference type="InterPro" id="IPR008181">
    <property type="entry name" value="dUTPase"/>
</dbReference>
<dbReference type="InterPro" id="IPR029054">
    <property type="entry name" value="dUTPase-like"/>
</dbReference>
<dbReference type="InterPro" id="IPR036157">
    <property type="entry name" value="dUTPase-like_sf"/>
</dbReference>
<dbReference type="InterPro" id="IPR033704">
    <property type="entry name" value="dUTPase_trimeric"/>
</dbReference>
<dbReference type="NCBIfam" id="TIGR00576">
    <property type="entry name" value="dut"/>
    <property type="match status" value="1"/>
</dbReference>
<dbReference type="NCBIfam" id="NF001862">
    <property type="entry name" value="PRK00601.1"/>
    <property type="match status" value="1"/>
</dbReference>
<dbReference type="PANTHER" id="PTHR11241">
    <property type="entry name" value="DEOXYURIDINE 5'-TRIPHOSPHATE NUCLEOTIDOHYDROLASE"/>
    <property type="match status" value="1"/>
</dbReference>
<dbReference type="PANTHER" id="PTHR11241:SF0">
    <property type="entry name" value="DEOXYURIDINE 5'-TRIPHOSPHATE NUCLEOTIDOHYDROLASE"/>
    <property type="match status" value="1"/>
</dbReference>
<dbReference type="Pfam" id="PF00692">
    <property type="entry name" value="dUTPase"/>
    <property type="match status" value="1"/>
</dbReference>
<dbReference type="SUPFAM" id="SSF51283">
    <property type="entry name" value="dUTPase-like"/>
    <property type="match status" value="1"/>
</dbReference>
<comment type="function">
    <text evidence="1">This enzyme is involved in nucleotide metabolism: it produces dUMP, the immediate precursor of thymidine nucleotides and it decreases the intracellular concentration of dUTP so that uracil cannot be incorporated into DNA.</text>
</comment>
<comment type="catalytic activity">
    <reaction evidence="1">
        <text>dUTP + H2O = dUMP + diphosphate + H(+)</text>
        <dbReference type="Rhea" id="RHEA:10248"/>
        <dbReference type="ChEBI" id="CHEBI:15377"/>
        <dbReference type="ChEBI" id="CHEBI:15378"/>
        <dbReference type="ChEBI" id="CHEBI:33019"/>
        <dbReference type="ChEBI" id="CHEBI:61555"/>
        <dbReference type="ChEBI" id="CHEBI:246422"/>
        <dbReference type="EC" id="3.6.1.23"/>
    </reaction>
</comment>
<comment type="cofactor">
    <cofactor evidence="1">
        <name>Mg(2+)</name>
        <dbReference type="ChEBI" id="CHEBI:18420"/>
    </cofactor>
</comment>
<comment type="pathway">
    <text evidence="1">Pyrimidine metabolism; dUMP biosynthesis; dUMP from dCTP (dUTP route): step 2/2.</text>
</comment>
<comment type="subunit">
    <text evidence="1">Homotrimer.</text>
</comment>
<comment type="similarity">
    <text evidence="1">Belongs to the dUTPase family.</text>
</comment>